<proteinExistence type="inferred from homology"/>
<sequence>MTQQCNCSEGSCGGTRYEELVLERMLYSARLKESVARRDSDVIVAMASMIADTFREGGKVLLCGNGGSAADAQHLAAEFTIRYRSSVHRPALPAIALSTDTSALTAGANDLGFDEVFVRLTEAYGCPGDILIGLSTSGNSASVLKALEFARKRGLKTLALLGGDGGAIKPHADLAVVVPHTGSADRIQECHIAVGHVIVELVEKMMGYD</sequence>
<reference key="1">
    <citation type="journal article" date="2002" name="Proc. Natl. Acad. Sci. U.S.A.">
        <title>The complete genome sequence of Chlorobium tepidum TLS, a photosynthetic, anaerobic, green-sulfur bacterium.</title>
        <authorList>
            <person name="Eisen J.A."/>
            <person name="Nelson K.E."/>
            <person name="Paulsen I.T."/>
            <person name="Heidelberg J.F."/>
            <person name="Wu M."/>
            <person name="Dodson R.J."/>
            <person name="DeBoy R.T."/>
            <person name="Gwinn M.L."/>
            <person name="Nelson W.C."/>
            <person name="Haft D.H."/>
            <person name="Hickey E.K."/>
            <person name="Peterson J.D."/>
            <person name="Durkin A.S."/>
            <person name="Kolonay J.F."/>
            <person name="Yang F."/>
            <person name="Holt I.E."/>
            <person name="Umayam L.A."/>
            <person name="Mason T.M."/>
            <person name="Brenner M."/>
            <person name="Shea T.P."/>
            <person name="Parksey D.S."/>
            <person name="Nierman W.C."/>
            <person name="Feldblyum T.V."/>
            <person name="Hansen C.L."/>
            <person name="Craven M.B."/>
            <person name="Radune D."/>
            <person name="Vamathevan J.J."/>
            <person name="Khouri H.M."/>
            <person name="White O."/>
            <person name="Gruber T.M."/>
            <person name="Ketchum K.A."/>
            <person name="Venter J.C."/>
            <person name="Tettelin H."/>
            <person name="Bryant D.A."/>
            <person name="Fraser C.M."/>
        </authorList>
    </citation>
    <scope>NUCLEOTIDE SEQUENCE [LARGE SCALE GENOMIC DNA]</scope>
    <source>
        <strain>ATCC 49652 / DSM 12025 / NBRC 103806 / TLS</strain>
    </source>
</reference>
<keyword id="KW-0119">Carbohydrate metabolism</keyword>
<keyword id="KW-0963">Cytoplasm</keyword>
<keyword id="KW-0413">Isomerase</keyword>
<keyword id="KW-0479">Metal-binding</keyword>
<keyword id="KW-1185">Reference proteome</keyword>
<keyword id="KW-0862">Zinc</keyword>
<protein>
    <recommendedName>
        <fullName evidence="1">Phosphoheptose isomerase</fullName>
        <ecNumber evidence="1">5.3.1.28</ecNumber>
    </recommendedName>
    <alternativeName>
        <fullName evidence="1">Sedoheptulose 7-phosphate isomerase</fullName>
    </alternativeName>
</protein>
<accession>Q8KAW3</accession>
<evidence type="ECO:0000255" key="1">
    <source>
        <dbReference type="HAMAP-Rule" id="MF_00067"/>
    </source>
</evidence>
<organism>
    <name type="scientific">Chlorobaculum tepidum (strain ATCC 49652 / DSM 12025 / NBRC 103806 / TLS)</name>
    <name type="common">Chlorobium tepidum</name>
    <dbReference type="NCBI Taxonomy" id="194439"/>
    <lineage>
        <taxon>Bacteria</taxon>
        <taxon>Pseudomonadati</taxon>
        <taxon>Chlorobiota</taxon>
        <taxon>Chlorobiia</taxon>
        <taxon>Chlorobiales</taxon>
        <taxon>Chlorobiaceae</taxon>
        <taxon>Chlorobaculum</taxon>
    </lineage>
</organism>
<gene>
    <name evidence="1" type="primary">gmhA</name>
    <name type="synonym">lpcA</name>
    <name type="ordered locus">CT2038</name>
</gene>
<dbReference type="EC" id="5.3.1.28" evidence="1"/>
<dbReference type="EMBL" id="AE006470">
    <property type="protein sequence ID" value="AAM73255.1"/>
    <property type="molecule type" value="Genomic_DNA"/>
</dbReference>
<dbReference type="RefSeq" id="NP_662913.1">
    <property type="nucleotide sequence ID" value="NC_002932.3"/>
</dbReference>
<dbReference type="RefSeq" id="WP_010933693.1">
    <property type="nucleotide sequence ID" value="NC_002932.3"/>
</dbReference>
<dbReference type="SMR" id="Q8KAW3"/>
<dbReference type="STRING" id="194439.CT2038"/>
<dbReference type="EnsemblBacteria" id="AAM73255">
    <property type="protein sequence ID" value="AAM73255"/>
    <property type="gene ID" value="CT2038"/>
</dbReference>
<dbReference type="KEGG" id="cte:CT2038"/>
<dbReference type="PATRIC" id="fig|194439.7.peg.1847"/>
<dbReference type="eggNOG" id="COG0279">
    <property type="taxonomic scope" value="Bacteria"/>
</dbReference>
<dbReference type="HOGENOM" id="CLU_080999_4_0_10"/>
<dbReference type="OrthoDB" id="9781311at2"/>
<dbReference type="UniPathway" id="UPA00041">
    <property type="reaction ID" value="UER00436"/>
</dbReference>
<dbReference type="Proteomes" id="UP000001007">
    <property type="component" value="Chromosome"/>
</dbReference>
<dbReference type="GO" id="GO:0005737">
    <property type="term" value="C:cytoplasm"/>
    <property type="evidence" value="ECO:0007669"/>
    <property type="project" value="UniProtKB-SubCell"/>
</dbReference>
<dbReference type="GO" id="GO:0097367">
    <property type="term" value="F:carbohydrate derivative binding"/>
    <property type="evidence" value="ECO:0007669"/>
    <property type="project" value="InterPro"/>
</dbReference>
<dbReference type="GO" id="GO:0008968">
    <property type="term" value="F:D-sedoheptulose 7-phosphate isomerase activity"/>
    <property type="evidence" value="ECO:0007669"/>
    <property type="project" value="UniProtKB-UniRule"/>
</dbReference>
<dbReference type="GO" id="GO:0008270">
    <property type="term" value="F:zinc ion binding"/>
    <property type="evidence" value="ECO:0007669"/>
    <property type="project" value="UniProtKB-UniRule"/>
</dbReference>
<dbReference type="GO" id="GO:0005975">
    <property type="term" value="P:carbohydrate metabolic process"/>
    <property type="evidence" value="ECO:0007669"/>
    <property type="project" value="UniProtKB-UniRule"/>
</dbReference>
<dbReference type="GO" id="GO:2001061">
    <property type="term" value="P:D-glycero-D-manno-heptose 7-phosphate biosynthetic process"/>
    <property type="evidence" value="ECO:0007669"/>
    <property type="project" value="UniProtKB-UniPathway"/>
</dbReference>
<dbReference type="CDD" id="cd05006">
    <property type="entry name" value="SIS_GmhA"/>
    <property type="match status" value="1"/>
</dbReference>
<dbReference type="Gene3D" id="3.40.50.10490">
    <property type="entry name" value="Glucose-6-phosphate isomerase like protein, domain 1"/>
    <property type="match status" value="1"/>
</dbReference>
<dbReference type="HAMAP" id="MF_00067">
    <property type="entry name" value="GmhA"/>
    <property type="match status" value="1"/>
</dbReference>
<dbReference type="InterPro" id="IPR035461">
    <property type="entry name" value="GmhA/DiaA"/>
</dbReference>
<dbReference type="InterPro" id="IPR004515">
    <property type="entry name" value="Phosphoheptose_Isoase"/>
</dbReference>
<dbReference type="InterPro" id="IPR001347">
    <property type="entry name" value="SIS_dom"/>
</dbReference>
<dbReference type="InterPro" id="IPR046348">
    <property type="entry name" value="SIS_dom_sf"/>
</dbReference>
<dbReference type="InterPro" id="IPR050099">
    <property type="entry name" value="SIS_GmhA/DiaA_subfam"/>
</dbReference>
<dbReference type="PANTHER" id="PTHR30390">
    <property type="entry name" value="SEDOHEPTULOSE 7-PHOSPHATE ISOMERASE / DNAA INITIATOR-ASSOCIATING FACTOR FOR REPLICATION INITIATION"/>
    <property type="match status" value="1"/>
</dbReference>
<dbReference type="Pfam" id="PF13580">
    <property type="entry name" value="SIS_2"/>
    <property type="match status" value="1"/>
</dbReference>
<dbReference type="SUPFAM" id="SSF53697">
    <property type="entry name" value="SIS domain"/>
    <property type="match status" value="1"/>
</dbReference>
<dbReference type="PROSITE" id="PS51464">
    <property type="entry name" value="SIS"/>
    <property type="match status" value="1"/>
</dbReference>
<comment type="function">
    <text evidence="1">Catalyzes the isomerization of sedoheptulose 7-phosphate in D-glycero-D-manno-heptose 7-phosphate.</text>
</comment>
<comment type="catalytic activity">
    <reaction evidence="1">
        <text>2 D-sedoheptulose 7-phosphate = D-glycero-alpha-D-manno-heptose 7-phosphate + D-glycero-beta-D-manno-heptose 7-phosphate</text>
        <dbReference type="Rhea" id="RHEA:27489"/>
        <dbReference type="ChEBI" id="CHEBI:57483"/>
        <dbReference type="ChEBI" id="CHEBI:60203"/>
        <dbReference type="ChEBI" id="CHEBI:60204"/>
        <dbReference type="EC" id="5.3.1.28"/>
    </reaction>
</comment>
<comment type="cofactor">
    <cofactor evidence="1">
        <name>Zn(2+)</name>
        <dbReference type="ChEBI" id="CHEBI:29105"/>
    </cofactor>
    <text evidence="1">Binds 1 zinc ion per subunit.</text>
</comment>
<comment type="pathway">
    <text evidence="1">Carbohydrate biosynthesis; D-glycero-D-manno-heptose 7-phosphate biosynthesis; D-glycero-alpha-D-manno-heptose 7-phosphate and D-glycero-beta-D-manno-heptose 7-phosphate from sedoheptulose 7-phosphate: step 1/1.</text>
</comment>
<comment type="subcellular location">
    <subcellularLocation>
        <location evidence="1">Cytoplasm</location>
    </subcellularLocation>
</comment>
<comment type="miscellaneous">
    <text evidence="1">The reaction produces a racemic mixture of D-glycero-alpha-D-manno-heptose 7-phosphate and D-glycero-beta-D-manno-heptose 7-phosphate.</text>
</comment>
<comment type="similarity">
    <text evidence="1">Belongs to the SIS family. GmhA subfamily.</text>
</comment>
<feature type="chain" id="PRO_0000136524" description="Phosphoheptose isomerase">
    <location>
        <begin position="1"/>
        <end position="209"/>
    </location>
</feature>
<feature type="domain" description="SIS" evidence="1">
    <location>
        <begin position="50"/>
        <end position="209"/>
    </location>
</feature>
<feature type="binding site" evidence="1">
    <location>
        <begin position="65"/>
        <end position="67"/>
    </location>
    <ligand>
        <name>substrate</name>
    </ligand>
</feature>
<feature type="binding site" evidence="1">
    <location>
        <position position="74"/>
    </location>
    <ligand>
        <name>Zn(2+)</name>
        <dbReference type="ChEBI" id="CHEBI:29105"/>
    </ligand>
</feature>
<feature type="binding site" evidence="1">
    <location>
        <position position="78"/>
    </location>
    <ligand>
        <name>substrate</name>
    </ligand>
</feature>
<feature type="binding site" evidence="1">
    <location>
        <position position="78"/>
    </location>
    <ligand>
        <name>Zn(2+)</name>
        <dbReference type="ChEBI" id="CHEBI:29105"/>
    </ligand>
</feature>
<feature type="binding site" evidence="1">
    <location>
        <begin position="109"/>
        <end position="110"/>
    </location>
    <ligand>
        <name>substrate</name>
    </ligand>
</feature>
<feature type="binding site" evidence="1">
    <location>
        <begin position="135"/>
        <end position="137"/>
    </location>
    <ligand>
        <name>substrate</name>
    </ligand>
</feature>
<feature type="binding site" evidence="1">
    <location>
        <position position="140"/>
    </location>
    <ligand>
        <name>substrate</name>
    </ligand>
</feature>
<feature type="binding site" evidence="1">
    <location>
        <position position="188"/>
    </location>
    <ligand>
        <name>substrate</name>
    </ligand>
</feature>
<feature type="binding site" evidence="1">
    <location>
        <position position="188"/>
    </location>
    <ligand>
        <name>Zn(2+)</name>
        <dbReference type="ChEBI" id="CHEBI:29105"/>
    </ligand>
</feature>
<feature type="binding site" evidence="1">
    <location>
        <position position="196"/>
    </location>
    <ligand>
        <name>Zn(2+)</name>
        <dbReference type="ChEBI" id="CHEBI:29105"/>
    </ligand>
</feature>
<name>GMHA_CHLTE</name>